<dbReference type="EC" id="1.14.14.-" evidence="4"/>
<dbReference type="EMBL" id="KC145148">
    <property type="protein sequence ID" value="AGO59046.1"/>
    <property type="molecule type" value="Genomic_DNA"/>
</dbReference>
<dbReference type="EMBL" id="KI912116">
    <property type="protein sequence ID" value="ETS76965.1"/>
    <property type="molecule type" value="Genomic_DNA"/>
</dbReference>
<dbReference type="RefSeq" id="XP_007837611.1">
    <property type="nucleotide sequence ID" value="XM_007839420.1"/>
</dbReference>
<dbReference type="SMR" id="A0A067XMV4"/>
<dbReference type="STRING" id="1229662.A0A067XMV4"/>
<dbReference type="GlyCosmos" id="A0A067XMV4">
    <property type="glycosylation" value="7 sites, No reported glycans"/>
</dbReference>
<dbReference type="GeneID" id="19275852"/>
<dbReference type="KEGG" id="pfy:PFICI_10839"/>
<dbReference type="eggNOG" id="ENOG502QW6Y">
    <property type="taxonomic scope" value="Eukaryota"/>
</dbReference>
<dbReference type="InParanoid" id="A0A067XMV4"/>
<dbReference type="OMA" id="FPRYQIG"/>
<dbReference type="OrthoDB" id="3340390at2759"/>
<dbReference type="Proteomes" id="UP000030651">
    <property type="component" value="Unassembled WGS sequence"/>
</dbReference>
<dbReference type="GO" id="GO:0140907">
    <property type="term" value="F:flavin-dependent halogenase activity"/>
    <property type="evidence" value="ECO:0000314"/>
    <property type="project" value="GO_Central"/>
</dbReference>
<dbReference type="GO" id="GO:0004497">
    <property type="term" value="F:monooxygenase activity"/>
    <property type="evidence" value="ECO:0007669"/>
    <property type="project" value="UniProtKB-KW"/>
</dbReference>
<dbReference type="GO" id="GO:0044550">
    <property type="term" value="P:secondary metabolite biosynthetic process"/>
    <property type="evidence" value="ECO:0000314"/>
    <property type="project" value="GO_Central"/>
</dbReference>
<dbReference type="Gene3D" id="3.50.50.60">
    <property type="entry name" value="FAD/NAD(P)-binding domain"/>
    <property type="match status" value="1"/>
</dbReference>
<dbReference type="InterPro" id="IPR036188">
    <property type="entry name" value="FAD/NAD-bd_sf"/>
</dbReference>
<dbReference type="InterPro" id="IPR050816">
    <property type="entry name" value="Flavin-dep_Halogenase_NPB"/>
</dbReference>
<dbReference type="InterPro" id="IPR006905">
    <property type="entry name" value="Flavin_halogenase"/>
</dbReference>
<dbReference type="PANTHER" id="PTHR43747:SF5">
    <property type="entry name" value="FAD-BINDING DOMAIN-CONTAINING PROTEIN"/>
    <property type="match status" value="1"/>
</dbReference>
<dbReference type="PANTHER" id="PTHR43747">
    <property type="entry name" value="FAD-BINDING PROTEIN"/>
    <property type="match status" value="1"/>
</dbReference>
<dbReference type="Pfam" id="PF04820">
    <property type="entry name" value="Trp_halogenase"/>
    <property type="match status" value="2"/>
</dbReference>
<dbReference type="PRINTS" id="PR00420">
    <property type="entry name" value="RNGMNOXGNASE"/>
</dbReference>
<dbReference type="SUPFAM" id="SSF51905">
    <property type="entry name" value="FAD/NAD(P)-binding domain"/>
    <property type="match status" value="1"/>
</dbReference>
<feature type="signal peptide" evidence="2">
    <location>
        <begin position="1"/>
        <end position="21"/>
    </location>
</feature>
<feature type="chain" id="PRO_0000443043" description="Flavin-dependent halogenase ptaM">
    <location>
        <begin position="22"/>
        <end position="540"/>
    </location>
</feature>
<feature type="binding site" evidence="1">
    <location>
        <position position="14"/>
    </location>
    <ligand>
        <name>FAD</name>
        <dbReference type="ChEBI" id="CHEBI:57692"/>
    </ligand>
</feature>
<feature type="binding site" evidence="1">
    <location>
        <position position="17"/>
    </location>
    <ligand>
        <name>FAD</name>
        <dbReference type="ChEBI" id="CHEBI:57692"/>
    </ligand>
</feature>
<feature type="binding site" evidence="1">
    <location>
        <position position="47"/>
    </location>
    <ligand>
        <name>FAD</name>
        <dbReference type="ChEBI" id="CHEBI:57692"/>
    </ligand>
</feature>
<feature type="binding site" evidence="1">
    <location>
        <position position="330"/>
    </location>
    <ligand>
        <name>chloride</name>
        <dbReference type="ChEBI" id="CHEBI:17996"/>
    </ligand>
</feature>
<feature type="binding site" evidence="1">
    <location>
        <position position="331"/>
    </location>
    <ligand>
        <name>chloride</name>
        <dbReference type="ChEBI" id="CHEBI:17996"/>
    </ligand>
</feature>
<feature type="glycosylation site" description="N-linked (GlcNAc...) asparagine" evidence="3">
    <location>
        <position position="159"/>
    </location>
</feature>
<feature type="glycosylation site" description="N-linked (GlcNAc...) asparagine" evidence="3">
    <location>
        <position position="192"/>
    </location>
</feature>
<feature type="glycosylation site" description="N-linked (GlcNAc...) asparagine" evidence="3">
    <location>
        <position position="204"/>
    </location>
</feature>
<feature type="glycosylation site" description="N-linked (GlcNAc...) asparagine" evidence="3">
    <location>
        <position position="243"/>
    </location>
</feature>
<feature type="glycosylation site" description="N-linked (GlcNAc...) asparagine" evidence="3">
    <location>
        <position position="480"/>
    </location>
</feature>
<feature type="glycosylation site" description="N-linked (GlcNAc...) asparagine" evidence="3">
    <location>
        <position position="491"/>
    </location>
</feature>
<feature type="glycosylation site" description="N-linked (GlcNAc...) asparagine" evidence="3">
    <location>
        <position position="523"/>
    </location>
</feature>
<name>PTAM_PESFW</name>
<sequence length="540" mass="60041">MSVPAQTSVLIVGGGPAGSYAATVLAREGVDVVLLEAEKFPRYHIGESMLASIRFFLRFVELEEEFDRHGFEKKYGATFKITEKNPAYTDFAASLGEGGYSWNVVRSESDEIIFRYAGKCGAKTFDGTKVESLTFEPYPHEGFDESVHLANPGRPVSANWSRKDGSSGVIKFDYIIDGSGRNGLISTKYLKNRSFNQGLKNIANWTYWKGAKRFNVGEKNENSPLFEALKDGSGWVWAIPLHNDTISVGVVARQDAFFEKKKESGLSGEAFYKEYLKLAPQIKNELLRDATIVSDIKQATDWSYSASAYAGPNFRLIGDAGCFVDPYFSSGCHLAMTSALSASVSIQAVRRGQCDELTGAKWHTTKVAEGYTRFLLLVMTVQRQLRMKDKNIISTDEEEGFDMAFKKIQPVIQGVADTRTEDEQTQRRAAEAVDFSLESFEITPEKQAAVISKIERSQAEPELLEKLTPEEVHILGNIVNRTFEREKDELNLTHFTGDMIDGYSAKLEHGNIGLYKREKALLNGTASRAAAVLKSIHQVA</sequence>
<gene>
    <name evidence="6" type="primary">ptaM</name>
    <name type="ORF">PFICI_10839</name>
</gene>
<accession>A0A067XMV4</accession>
<accession>W3WSX6</accession>
<evidence type="ECO:0000250" key="1">
    <source>
        <dbReference type="UniProtKB" id="P95480"/>
    </source>
</evidence>
<evidence type="ECO:0000255" key="2"/>
<evidence type="ECO:0000255" key="3">
    <source>
        <dbReference type="PROSITE-ProRule" id="PRU00498"/>
    </source>
</evidence>
<evidence type="ECO:0000269" key="4">
    <source>
    </source>
</evidence>
<evidence type="ECO:0000269" key="5">
    <source>
    </source>
</evidence>
<evidence type="ECO:0000303" key="6">
    <source>
    </source>
</evidence>
<evidence type="ECO:0000305" key="7"/>
<keyword id="KW-0274">FAD</keyword>
<keyword id="KW-0285">Flavoprotein</keyword>
<keyword id="KW-0325">Glycoprotein</keyword>
<keyword id="KW-0503">Monooxygenase</keyword>
<keyword id="KW-0560">Oxidoreductase</keyword>
<keyword id="KW-1185">Reference proteome</keyword>
<keyword id="KW-0732">Signal</keyword>
<comment type="function">
    <text evidence="4">Flavin-dependent halogenase; part of the gene cluster that mediates the biosynthesis of pestheic acid, a diphenyl ether which is a biosynthetic precursor of the unique chloropupukeananes (PubMed:24302702). The biosynthesis initiates from condensation of acetate and malonate units catalyzed by the non-reducing PKS ptaA (PubMed:24302702). As the ptaA protein is TE/CLC domain-deficient, hydrolysis and Claisen cyclization of the polyketide could be catalyzed by ptaB containing a beta-lactamase domain (PubMed:24302702). The ptaB protein might hydrolyze the thioester bond between the ACP of ptaA and the intermediate to release atrochrysone carboxylic acid, which is spontaneously dehydrated to form endocrocin anthrone (PubMed:24302702). Endocrocin anthrone is then converted to endocrocin, catalyzed by the anthrone oxygenase ptaC (PubMed:24302702). Spontaneous decarboxylation of endocrocin occurs to generate emodin (PubMed:24302702). An O-methyltransferase (ptaH or ptaI) could methylate emodin to form physcion (PubMed:24302702). PtaJ could then catalyze the oxidative cleavage of physcion, and rotation of the intermediate could then afford desmethylisosulochrin (PubMed:24302702). PtaF, a putative NADH-dependent oxidoreductase, might also participate in the oxidative cleavage step (PubMed:24302702). Desmethylisosulochrin is then transformed by another O-methyltransferase (ptaH or ptaI) to form isosulochrin (PubMed:24302702). Chlorination of isosulochrin by ptaM in the cyclohexadienone B ring then produces chloroisosulochrin (PubMed:24302702). PtaE is responsible for the oxidative coupling reactions of both benzophenones isosulochrin and chloroisosulochrin to RES-1214-1 and pestheic acid respectively, regardless of chlorination.</text>
</comment>
<comment type="biophysicochemical properties">
    <kinetics>
        <KM evidence="4">155 uM for isosulochrin</KM>
    </kinetics>
</comment>
<comment type="pathway">
    <text evidence="4">Secondary metabolite biosynthesis.</text>
</comment>
<comment type="induction">
    <text evidence="4 5">The cluster is expressed in rice fermentation medium (PubMed:25623211). Expression is correlated with the production of pestheic acid (PubMed:24302702). Three regulators are located in the cluster (ptaR1, ptaR2 and ptaR3), suggesting that the production of pestheic acid is controlled by a complex regulatory mechanism (PubMed:24302702).</text>
</comment>
<comment type="disruption phenotype">
    <text evidence="4">Abolishes completely the production of chloroisosulochrin and pestheic acid, whereas their non-chlorinated precursors, isosulochrin and RES-1214-1, still accumulate (PubMed:24302702).</text>
</comment>
<comment type="similarity">
    <text evidence="7">Belongs to the flavin-dependent halogenase family.</text>
</comment>
<proteinExistence type="evidence at protein level"/>
<protein>
    <recommendedName>
        <fullName evidence="6">Flavin-dependent halogenase ptaM</fullName>
        <ecNumber evidence="4">1.14.14.-</ecNumber>
    </recommendedName>
    <alternativeName>
        <fullName evidence="6">Pestheic acid biosynthesis cluster protein M</fullName>
    </alternativeName>
</protein>
<reference key="1">
    <citation type="journal article" date="2014" name="ChemBioChem">
        <title>Identification of the first diphenyl ether gene cluster for pestheic acid biosynthesis in plant endophyte Pestalotiopsis fici.</title>
        <authorList>
            <person name="Xu X."/>
            <person name="Liu L."/>
            <person name="Zhang F."/>
            <person name="Wang W."/>
            <person name="Li J."/>
            <person name="Guo L."/>
            <person name="Che Y."/>
            <person name="Liu G."/>
        </authorList>
    </citation>
    <scope>NUCLEOTIDE SEQUENCE [GENOMIC DNA]</scope>
    <scope>FUNCTION</scope>
    <scope>DISRUPTION PHENOTYPE</scope>
    <scope>CATALYTIC ACTIVITY</scope>
    <scope>BIOPHYSICOCHEMICAL PROPERTIES</scope>
    <scope>INDUCTION</scope>
    <source>
        <strain>W106-1 / CGMCC3.15140</strain>
    </source>
</reference>
<reference key="2">
    <citation type="journal article" date="2015" name="BMC Genomics">
        <title>Genomic and transcriptomic analysis of the endophytic fungus Pestalotiopsis fici reveals its lifestyle and high potential for synthesis of natural products.</title>
        <authorList>
            <person name="Wang X."/>
            <person name="Zhang X."/>
            <person name="Liu L."/>
            <person name="Xiang M."/>
            <person name="Wang W."/>
            <person name="Sun X."/>
            <person name="Che Y."/>
            <person name="Guo L."/>
            <person name="Liu G."/>
            <person name="Guo L."/>
            <person name="Wang C."/>
            <person name="Yin W.B."/>
            <person name="Stadler M."/>
            <person name="Zhang X."/>
            <person name="Liu X."/>
        </authorList>
    </citation>
    <scope>NUCLEOTIDE SEQUENCE [LARGE SCALE GENOMIC DNA]</scope>
    <scope>INDUCTION</scope>
    <source>
        <strain>W106-1 / CGMCC3.15140</strain>
    </source>
</reference>
<organism>
    <name type="scientific">Pestalotiopsis fici (strain W106-1 / CGMCC3.15140)</name>
    <dbReference type="NCBI Taxonomy" id="1229662"/>
    <lineage>
        <taxon>Eukaryota</taxon>
        <taxon>Fungi</taxon>
        <taxon>Dikarya</taxon>
        <taxon>Ascomycota</taxon>
        <taxon>Pezizomycotina</taxon>
        <taxon>Sordariomycetes</taxon>
        <taxon>Xylariomycetidae</taxon>
        <taxon>Amphisphaeriales</taxon>
        <taxon>Sporocadaceae</taxon>
        <taxon>Pestalotiopsis</taxon>
    </lineage>
</organism>